<comment type="function">
    <text evidence="2">Plays a role in protein homeostasis by regulating both the translocation and the ubiquitin-mediated proteasomal degradation of nascent proteins at the endoplasmic reticulum. It is involved in the regulation of signal-mediated translocation of proteins into the endoplasmic reticulum. It also plays a role in the ubiquitin-mediated proteasomal degradation of proteins for which signal-mediated translocation to the endoplasmic reticulum has failed. May therefore function in the endoplasmic reticulum stress-induced pre-emptive quality control, a mechanism that selectively attenuates the translocation of newly synthesized proteins into the endoplasmic reticulum and reroutes them to the cytosol for proteasomal degradation. By controlling the steady-state expression of the IGF1R receptor, indirectly regulates the insulin-like growth factor receptor signaling pathway.</text>
</comment>
<comment type="subunit">
    <text evidence="2">Binds 'Lys-48'-linked polyubiquitin chains of ubiquitinated proteins. Associates with the proteasome complex; upon exposure to arsenite. Interacts (via VIM motif) with VCP; the interaction is direct. Interacts with BAG6. Interacts with IGF1R (nascent precursor form). Interacts with DERL1, FAF2, NPLOC4 and UFD1; probably through VCP.</text>
</comment>
<comment type="subcellular location">
    <subcellularLocation>
        <location evidence="2">Endoplasmic reticulum membrane</location>
        <topology evidence="2">Lipid-anchor</topology>
    </subcellularLocation>
</comment>
<comment type="domain">
    <text evidence="2">The UIM domains specifically bind 'Lys-48'-linked ubiquitin polymers. The UIM domains mediate interaction with polyubiquitinated proteins.</text>
</comment>
<comment type="PTM">
    <text evidence="2">Phosphorylated by MAPK14. Phosphorylation has no effect on association with the proteasome complex.</text>
</comment>
<name>ZFN2B_RAT</name>
<dbReference type="EMBL" id="BC099215">
    <property type="protein sequence ID" value="AAH99215.1"/>
    <property type="molecule type" value="mRNA"/>
</dbReference>
<dbReference type="RefSeq" id="NP_001020916.1">
    <property type="nucleotide sequence ID" value="NM_001025745.1"/>
</dbReference>
<dbReference type="RefSeq" id="XP_038939807.1">
    <property type="nucleotide sequence ID" value="XM_039083879.2"/>
</dbReference>
<dbReference type="RefSeq" id="XP_063123466.1">
    <property type="nucleotide sequence ID" value="XM_063267396.1"/>
</dbReference>
<dbReference type="SMR" id="Q4KLG9"/>
<dbReference type="FunCoup" id="Q4KLG9">
    <property type="interactions" value="1646"/>
</dbReference>
<dbReference type="STRING" id="10116.ENSRNOP00000025219"/>
<dbReference type="iPTMnet" id="Q4KLG9"/>
<dbReference type="PhosphoSitePlus" id="Q4KLG9"/>
<dbReference type="jPOST" id="Q4KLG9"/>
<dbReference type="PaxDb" id="10116-ENSRNOP00000025219"/>
<dbReference type="Ensembl" id="ENSRNOT00000025219.6">
    <property type="protein sequence ID" value="ENSRNOP00000025219.5"/>
    <property type="gene ID" value="ENSRNOG00000018639.6"/>
</dbReference>
<dbReference type="GeneID" id="363253"/>
<dbReference type="KEGG" id="rno:363253"/>
<dbReference type="UCSC" id="RGD:1306260">
    <property type="organism name" value="rat"/>
</dbReference>
<dbReference type="AGR" id="RGD:1306260"/>
<dbReference type="CTD" id="130617"/>
<dbReference type="RGD" id="1306260">
    <property type="gene designation" value="Zfand2b"/>
</dbReference>
<dbReference type="eggNOG" id="KOG3183">
    <property type="taxonomic scope" value="Eukaryota"/>
</dbReference>
<dbReference type="GeneTree" id="ENSGT00940000159648"/>
<dbReference type="HOGENOM" id="CLU_061621_2_0_1"/>
<dbReference type="InParanoid" id="Q4KLG9"/>
<dbReference type="OMA" id="DESKHNR"/>
<dbReference type="PhylomeDB" id="Q4KLG9"/>
<dbReference type="TreeFam" id="TF314219"/>
<dbReference type="PRO" id="PR:Q4KLG9"/>
<dbReference type="Proteomes" id="UP000002494">
    <property type="component" value="Chromosome 9"/>
</dbReference>
<dbReference type="Bgee" id="ENSRNOG00000018639">
    <property type="expression patterns" value="Expressed in duodenum and 19 other cell types or tissues"/>
</dbReference>
<dbReference type="GO" id="GO:0005737">
    <property type="term" value="C:cytoplasm"/>
    <property type="evidence" value="ECO:0000318"/>
    <property type="project" value="GO_Central"/>
</dbReference>
<dbReference type="GO" id="GO:0005783">
    <property type="term" value="C:endoplasmic reticulum"/>
    <property type="evidence" value="ECO:0000266"/>
    <property type="project" value="RGD"/>
</dbReference>
<dbReference type="GO" id="GO:0005789">
    <property type="term" value="C:endoplasmic reticulum membrane"/>
    <property type="evidence" value="ECO:0007669"/>
    <property type="project" value="UniProtKB-SubCell"/>
</dbReference>
<dbReference type="GO" id="GO:0016020">
    <property type="term" value="C:membrane"/>
    <property type="evidence" value="ECO:0000266"/>
    <property type="project" value="RGD"/>
</dbReference>
<dbReference type="GO" id="GO:0000502">
    <property type="term" value="C:proteasome complex"/>
    <property type="evidence" value="ECO:0000266"/>
    <property type="project" value="RGD"/>
</dbReference>
<dbReference type="GO" id="GO:0036435">
    <property type="term" value="F:K48-linked polyubiquitin modification-dependent protein binding"/>
    <property type="evidence" value="ECO:0000266"/>
    <property type="project" value="RGD"/>
</dbReference>
<dbReference type="GO" id="GO:0031593">
    <property type="term" value="F:polyubiquitin modification-dependent protein binding"/>
    <property type="evidence" value="ECO:0000266"/>
    <property type="project" value="RGD"/>
</dbReference>
<dbReference type="GO" id="GO:0043130">
    <property type="term" value="F:ubiquitin binding"/>
    <property type="evidence" value="ECO:0000266"/>
    <property type="project" value="RGD"/>
</dbReference>
<dbReference type="GO" id="GO:0008270">
    <property type="term" value="F:zinc ion binding"/>
    <property type="evidence" value="ECO:0007669"/>
    <property type="project" value="UniProtKB-KW"/>
</dbReference>
<dbReference type="GO" id="GO:0043161">
    <property type="term" value="P:proteasome-mediated ubiquitin-dependent protein catabolic process"/>
    <property type="evidence" value="ECO:0000266"/>
    <property type="project" value="RGD"/>
</dbReference>
<dbReference type="GO" id="GO:0045047">
    <property type="term" value="P:protein targeting to ER"/>
    <property type="evidence" value="ECO:0000266"/>
    <property type="project" value="RGD"/>
</dbReference>
<dbReference type="GO" id="GO:0043567">
    <property type="term" value="P:regulation of insulin-like growth factor receptor signaling pathway"/>
    <property type="evidence" value="ECO:0000266"/>
    <property type="project" value="RGD"/>
</dbReference>
<dbReference type="GO" id="GO:0006616">
    <property type="term" value="P:SRP-dependent cotranslational protein targeting to membrane, translocation"/>
    <property type="evidence" value="ECO:0000266"/>
    <property type="project" value="RGD"/>
</dbReference>
<dbReference type="FunFam" id="4.10.1110.10:FF:000003">
    <property type="entry name" value="AN1-type zinc finger protein 2B isoform X1"/>
    <property type="match status" value="1"/>
</dbReference>
<dbReference type="FunFam" id="4.10.1110.10:FF:000004">
    <property type="entry name" value="AN1-type zinc finger protein 2B isoform X1"/>
    <property type="match status" value="1"/>
</dbReference>
<dbReference type="Gene3D" id="4.10.1110.10">
    <property type="entry name" value="AN1-like Zinc finger"/>
    <property type="match status" value="2"/>
</dbReference>
<dbReference type="InterPro" id="IPR035896">
    <property type="entry name" value="AN1-like_Znf"/>
</dbReference>
<dbReference type="InterPro" id="IPR003903">
    <property type="entry name" value="UIM_dom"/>
</dbReference>
<dbReference type="InterPro" id="IPR000058">
    <property type="entry name" value="Znf_AN1"/>
</dbReference>
<dbReference type="PANTHER" id="PTHR14677:SF13">
    <property type="entry name" value="AN1-TYPE ZINC FINGER PROTEIN 2B"/>
    <property type="match status" value="1"/>
</dbReference>
<dbReference type="PANTHER" id="PTHR14677">
    <property type="entry name" value="ARSENITE INDUCUBLE RNA ASSOCIATED PROTEIN AIP-1-RELATED"/>
    <property type="match status" value="1"/>
</dbReference>
<dbReference type="Pfam" id="PF01428">
    <property type="entry name" value="zf-AN1"/>
    <property type="match status" value="2"/>
</dbReference>
<dbReference type="Pfam" id="PF25403">
    <property type="entry name" value="zf-C2H2_ZFAND2"/>
    <property type="match status" value="1"/>
</dbReference>
<dbReference type="SMART" id="SM00726">
    <property type="entry name" value="UIM"/>
    <property type="match status" value="2"/>
</dbReference>
<dbReference type="SMART" id="SM00154">
    <property type="entry name" value="ZnF_AN1"/>
    <property type="match status" value="2"/>
</dbReference>
<dbReference type="SUPFAM" id="SSF118310">
    <property type="entry name" value="AN1-like Zinc finger"/>
    <property type="match status" value="2"/>
</dbReference>
<dbReference type="PROSITE" id="PS50330">
    <property type="entry name" value="UIM"/>
    <property type="match status" value="2"/>
</dbReference>
<dbReference type="PROSITE" id="PS51039">
    <property type="entry name" value="ZF_AN1"/>
    <property type="match status" value="2"/>
</dbReference>
<feature type="chain" id="PRO_0000232878" description="AN1-type zinc finger protein 2B" evidence="2">
    <location>
        <begin position="1"/>
        <end position="254"/>
    </location>
</feature>
<feature type="propeptide" id="PRO_0000444337" description="Removed in mature form" evidence="2">
    <location>
        <begin position="255"/>
        <end position="257"/>
    </location>
</feature>
<feature type="domain" description="UIM 1" evidence="3">
    <location>
        <begin position="197"/>
        <end position="216"/>
    </location>
</feature>
<feature type="domain" description="UIM 2" evidence="3">
    <location>
        <begin position="221"/>
        <end position="240"/>
    </location>
</feature>
<feature type="zinc finger region" description="AN1-type 1" evidence="4">
    <location>
        <begin position="4"/>
        <end position="52"/>
    </location>
</feature>
<feature type="zinc finger region" description="AN1-type 2" evidence="4">
    <location>
        <begin position="94"/>
        <end position="142"/>
    </location>
</feature>
<feature type="region of interest" description="VCP/p97-interacting motif (VIM)" evidence="1">
    <location>
        <begin position="141"/>
        <end position="151"/>
    </location>
</feature>
<feature type="region of interest" description="Disordered" evidence="5">
    <location>
        <begin position="153"/>
        <end position="187"/>
    </location>
</feature>
<feature type="short sequence motif" description="CAAX motif" evidence="2">
    <location>
        <begin position="254"/>
        <end position="257"/>
    </location>
</feature>
<feature type="compositionally biased region" description="Low complexity" evidence="5">
    <location>
        <begin position="156"/>
        <end position="179"/>
    </location>
</feature>
<feature type="binding site" evidence="4">
    <location>
        <position position="10"/>
    </location>
    <ligand>
        <name>Zn(2+)</name>
        <dbReference type="ChEBI" id="CHEBI:29105"/>
        <label>1</label>
    </ligand>
</feature>
<feature type="binding site" evidence="4">
    <location>
        <position position="15"/>
    </location>
    <ligand>
        <name>Zn(2+)</name>
        <dbReference type="ChEBI" id="CHEBI:29105"/>
        <label>1</label>
    </ligand>
</feature>
<feature type="binding site" evidence="4">
    <location>
        <position position="25"/>
    </location>
    <ligand>
        <name>Zn(2+)</name>
        <dbReference type="ChEBI" id="CHEBI:29105"/>
        <label>2</label>
    </ligand>
</feature>
<feature type="binding site" evidence="4">
    <location>
        <position position="28"/>
    </location>
    <ligand>
        <name>Zn(2+)</name>
        <dbReference type="ChEBI" id="CHEBI:29105"/>
        <label>2</label>
    </ligand>
</feature>
<feature type="binding site" evidence="4">
    <location>
        <position position="33"/>
    </location>
    <ligand>
        <name>Zn(2+)</name>
        <dbReference type="ChEBI" id="CHEBI:29105"/>
        <label>1</label>
    </ligand>
</feature>
<feature type="binding site" evidence="4">
    <location>
        <position position="36"/>
    </location>
    <ligand>
        <name>Zn(2+)</name>
        <dbReference type="ChEBI" id="CHEBI:29105"/>
        <label>1</label>
    </ligand>
</feature>
<feature type="binding site" evidence="4">
    <location>
        <position position="42"/>
    </location>
    <ligand>
        <name>Zn(2+)</name>
        <dbReference type="ChEBI" id="CHEBI:29105"/>
        <label>2</label>
    </ligand>
</feature>
<feature type="binding site" evidence="4">
    <location>
        <position position="44"/>
    </location>
    <ligand>
        <name>Zn(2+)</name>
        <dbReference type="ChEBI" id="CHEBI:29105"/>
        <label>2</label>
    </ligand>
</feature>
<feature type="binding site" evidence="4">
    <location>
        <position position="100"/>
    </location>
    <ligand>
        <name>Zn(2+)</name>
        <dbReference type="ChEBI" id="CHEBI:29105"/>
        <label>3</label>
    </ligand>
</feature>
<feature type="binding site" evidence="4">
    <location>
        <position position="105"/>
    </location>
    <ligand>
        <name>Zn(2+)</name>
        <dbReference type="ChEBI" id="CHEBI:29105"/>
        <label>3</label>
    </ligand>
</feature>
<feature type="binding site" evidence="4">
    <location>
        <position position="115"/>
    </location>
    <ligand>
        <name>Zn(2+)</name>
        <dbReference type="ChEBI" id="CHEBI:29105"/>
        <label>4</label>
    </ligand>
</feature>
<feature type="binding site" evidence="4">
    <location>
        <position position="118"/>
    </location>
    <ligand>
        <name>Zn(2+)</name>
        <dbReference type="ChEBI" id="CHEBI:29105"/>
        <label>4</label>
    </ligand>
</feature>
<feature type="binding site" evidence="4">
    <location>
        <position position="123"/>
    </location>
    <ligand>
        <name>Zn(2+)</name>
        <dbReference type="ChEBI" id="CHEBI:29105"/>
        <label>3</label>
    </ligand>
</feature>
<feature type="binding site" evidence="4">
    <location>
        <position position="126"/>
    </location>
    <ligand>
        <name>Zn(2+)</name>
        <dbReference type="ChEBI" id="CHEBI:29105"/>
        <label>3</label>
    </ligand>
</feature>
<feature type="binding site" evidence="4">
    <location>
        <position position="132"/>
    </location>
    <ligand>
        <name>Zn(2+)</name>
        <dbReference type="ChEBI" id="CHEBI:29105"/>
        <label>4</label>
    </ligand>
</feature>
<feature type="binding site" evidence="4">
    <location>
        <position position="134"/>
    </location>
    <ligand>
        <name>Zn(2+)</name>
        <dbReference type="ChEBI" id="CHEBI:29105"/>
        <label>4</label>
    </ligand>
</feature>
<feature type="modified residue" description="Phosphoserine" evidence="2">
    <location>
        <position position="163"/>
    </location>
</feature>
<feature type="modified residue" description="Phosphoserine" evidence="2">
    <location>
        <position position="173"/>
    </location>
</feature>
<feature type="modified residue" description="Phosphoserine" evidence="8">
    <location>
        <position position="187"/>
    </location>
</feature>
<feature type="modified residue" description="Cysteine methyl ester" evidence="2">
    <location>
        <position position="254"/>
    </location>
</feature>
<feature type="lipid moiety-binding region" description="S-geranylgeranyl cysteine" evidence="2">
    <location>
        <position position="254"/>
    </location>
</feature>
<proteinExistence type="evidence at protein level"/>
<protein>
    <recommendedName>
        <fullName evidence="6">AN1-type zinc finger protein 2B</fullName>
    </recommendedName>
    <alternativeName>
        <fullName evidence="6">Arsenite-inducible RNA-associated protein-like protein</fullName>
        <shortName evidence="6">AIRAP-like protein</shortName>
    </alternativeName>
</protein>
<keyword id="KW-0256">Endoplasmic reticulum</keyword>
<keyword id="KW-0449">Lipoprotein</keyword>
<keyword id="KW-0472">Membrane</keyword>
<keyword id="KW-0479">Metal-binding</keyword>
<keyword id="KW-0488">Methylation</keyword>
<keyword id="KW-0597">Phosphoprotein</keyword>
<keyword id="KW-0636">Prenylation</keyword>
<keyword id="KW-1185">Reference proteome</keyword>
<keyword id="KW-0677">Repeat</keyword>
<keyword id="KW-0862">Zinc</keyword>
<keyword id="KW-0863">Zinc-finger</keyword>
<evidence type="ECO:0000250" key="1">
    <source>
        <dbReference type="UniProtKB" id="Q8WV99"/>
    </source>
</evidence>
<evidence type="ECO:0000250" key="2">
    <source>
        <dbReference type="UniProtKB" id="Q91X58"/>
    </source>
</evidence>
<evidence type="ECO:0000255" key="3">
    <source>
        <dbReference type="PROSITE-ProRule" id="PRU00213"/>
    </source>
</evidence>
<evidence type="ECO:0000255" key="4">
    <source>
        <dbReference type="PROSITE-ProRule" id="PRU00449"/>
    </source>
</evidence>
<evidence type="ECO:0000256" key="5">
    <source>
        <dbReference type="SAM" id="MobiDB-lite"/>
    </source>
</evidence>
<evidence type="ECO:0000305" key="6"/>
<evidence type="ECO:0000312" key="7">
    <source>
        <dbReference type="RGD" id="1306260"/>
    </source>
</evidence>
<evidence type="ECO:0007744" key="8">
    <source>
    </source>
</evidence>
<sequence length="257" mass="27925">MEFPDLGAHCSEPSCQRLDFLPLKCDACSGIFCADHVAYAHHHCGSAYQKDIQVPVCPLCNVPVPVARGEPPDRAVGEHIDRDCRSDPAQQKRKIFTNKCERSGCRQREMMKLTCDRCGRNFCIKHRHPLDHDCSGEGHPTSRAGLAAISRAQGLASTSTVPSPSRTLPSSSSPSRATPQLPPRTTSPVIALQNGLSEDEALQRALELSLAEAKPQIPSSQEEEDLALAQALSASEAEYQQQQAQSRSLKPSNCSLC</sequence>
<reference key="1">
    <citation type="journal article" date="2004" name="Genome Res.">
        <title>The status, quality, and expansion of the NIH full-length cDNA project: the Mammalian Gene Collection (MGC).</title>
        <authorList>
            <consortium name="The MGC Project Team"/>
        </authorList>
    </citation>
    <scope>NUCLEOTIDE SEQUENCE [LARGE SCALE MRNA]</scope>
    <source>
        <tissue>Thymus</tissue>
    </source>
</reference>
<reference key="2">
    <citation type="journal article" date="2012" name="Nat. Commun.">
        <title>Quantitative maps of protein phosphorylation sites across 14 different rat organs and tissues.</title>
        <authorList>
            <person name="Lundby A."/>
            <person name="Secher A."/>
            <person name="Lage K."/>
            <person name="Nordsborg N.B."/>
            <person name="Dmytriyev A."/>
            <person name="Lundby C."/>
            <person name="Olsen J.V."/>
        </authorList>
    </citation>
    <scope>PHOSPHORYLATION [LARGE SCALE ANALYSIS] AT SER-187</scope>
    <scope>IDENTIFICATION BY MASS SPECTROMETRY [LARGE SCALE ANALYSIS]</scope>
</reference>
<accession>Q4KLG9</accession>
<organism>
    <name type="scientific">Rattus norvegicus</name>
    <name type="common">Rat</name>
    <dbReference type="NCBI Taxonomy" id="10116"/>
    <lineage>
        <taxon>Eukaryota</taxon>
        <taxon>Metazoa</taxon>
        <taxon>Chordata</taxon>
        <taxon>Craniata</taxon>
        <taxon>Vertebrata</taxon>
        <taxon>Euteleostomi</taxon>
        <taxon>Mammalia</taxon>
        <taxon>Eutheria</taxon>
        <taxon>Euarchontoglires</taxon>
        <taxon>Glires</taxon>
        <taxon>Rodentia</taxon>
        <taxon>Myomorpha</taxon>
        <taxon>Muroidea</taxon>
        <taxon>Muridae</taxon>
        <taxon>Murinae</taxon>
        <taxon>Rattus</taxon>
    </lineage>
</organism>
<gene>
    <name evidence="7" type="primary">Zfand2b</name>
</gene>